<keyword id="KW-1232">Capsid decoration protein</keyword>
<keyword id="KW-0167">Capsid protein</keyword>
<keyword id="KW-0175">Coiled coil</keyword>
<keyword id="KW-1048">Host nucleus</keyword>
<keyword id="KW-0945">Host-virus interaction</keyword>
<keyword id="KW-0946">Virion</keyword>
<keyword id="KW-1160">Virus entry into host cell</keyword>
<comment type="function">
    <text evidence="1">Structural component of the virion that acts as a cement protein on the capsid exterior and forms triskelion structures consisting of three molecules that stabilize three hexon trimers at the center of each icosahedral facet and fixes the peripentonal hexons. Dispensable for assembly. During virus entry, recruits the anterograde motor kinesin-1 to the capsid docked at the nuclear pore complex thereby subjecting the docked capsid to a pulling force. The resulting tension leads to capsid disruption, dispersion of capsid fragments toward cell periphery and eventually viral DNA entry into the host nucleus.</text>
</comment>
<comment type="subunit">
    <text evidence="1">Homotrimer. Interacts with hexon protein; this interaction tethers the hexons together. Self-interacts with adjacent proteins. Interacts with kinesin light chain KLC1; this interaction leads to capsid disruption at the nuclear pore complex during virus entry into host cell.</text>
</comment>
<comment type="subcellular location">
    <subcellularLocation>
        <location evidence="1">Virion</location>
    </subcellularLocation>
    <subcellularLocation>
        <location evidence="1">Host nucleus</location>
    </subcellularLocation>
    <text evidence="1">Located in the canyons between the hexons on the outer surface of the capsid. Forms a sort of hairnet on the outer side of the virion. Present in 240 copies per virion.</text>
</comment>
<comment type="induction">
    <text evidence="1">Expressed in the intermediate phase of the viral replicative cycle.</text>
</comment>
<comment type="domain">
    <text evidence="1">Three N-terminal domains of hexon-interlacing protein form triskelions between hexon capsomers.</text>
</comment>
<comment type="miscellaneous">
    <text evidence="1">This protein is only encoded by mastadenoviruses, and may therefore play a role in mammals tropism.</text>
</comment>
<comment type="similarity">
    <text evidence="1">Belongs to the adenoviridae hexon-interlacing protein family.</text>
</comment>
<accession>P68969</accession>
<accession>Q65944</accession>
<reference key="1">
    <citation type="journal article" date="1997" name="J. Gen. Virol.">
        <title>Complete DNA sequence of canine adenovirus type 1.</title>
        <authorList>
            <person name="Morrison M.D."/>
            <person name="Onions D.E."/>
            <person name="Nicolson L."/>
        </authorList>
    </citation>
    <scope>NUCLEOTIDE SEQUENCE [LARGE SCALE GENOMIC DNA]</scope>
</reference>
<proteinExistence type="inferred from homology"/>
<name>CAP9_ADECR</name>
<protein>
    <recommendedName>
        <fullName evidence="1">Hexon-interlacing protein</fullName>
    </recommendedName>
    <alternativeName>
        <fullName evidence="1">Protein IX</fullName>
    </alternativeName>
</protein>
<dbReference type="EMBL" id="Y07760">
    <property type="protein sequence ID" value="CAA69055.1"/>
    <property type="molecule type" value="Genomic_DNA"/>
</dbReference>
<dbReference type="RefSeq" id="AP_000048.1">
    <property type="nucleotide sequence ID" value="AC_000003.1"/>
</dbReference>
<dbReference type="SMR" id="P68969"/>
<dbReference type="KEGG" id="vg:1488949"/>
<dbReference type="Proteomes" id="UP000126130">
    <property type="component" value="Segment"/>
</dbReference>
<dbReference type="GO" id="GO:0042025">
    <property type="term" value="C:host cell nucleus"/>
    <property type="evidence" value="ECO:0007669"/>
    <property type="project" value="UniProtKB-SubCell"/>
</dbReference>
<dbReference type="GO" id="GO:0098021">
    <property type="term" value="C:viral capsid, decoration"/>
    <property type="evidence" value="ECO:0007669"/>
    <property type="project" value="UniProtKB-UniRule"/>
</dbReference>
<dbReference type="GO" id="GO:0031423">
    <property type="term" value="F:hexon binding"/>
    <property type="evidence" value="ECO:0007669"/>
    <property type="project" value="InterPro"/>
</dbReference>
<dbReference type="GO" id="GO:0046718">
    <property type="term" value="P:symbiont entry into host cell"/>
    <property type="evidence" value="ECO:0007669"/>
    <property type="project" value="UniProtKB-UniRule"/>
</dbReference>
<dbReference type="HAMAP" id="MF_04050">
    <property type="entry name" value="ADV_CAP9"/>
    <property type="match status" value="1"/>
</dbReference>
<dbReference type="InterPro" id="IPR005641">
    <property type="entry name" value="Hexon_assoc_IX"/>
</dbReference>
<dbReference type="Pfam" id="PF03955">
    <property type="entry name" value="Adeno_PIX"/>
    <property type="match status" value="1"/>
</dbReference>
<evidence type="ECO:0000255" key="1">
    <source>
        <dbReference type="HAMAP-Rule" id="MF_04050"/>
    </source>
</evidence>
<evidence type="ECO:0000256" key="2">
    <source>
        <dbReference type="SAM" id="MobiDB-lite"/>
    </source>
</evidence>
<feature type="chain" id="PRO_0000221852" description="Hexon-interlacing protein" evidence="1">
    <location>
        <begin position="1"/>
        <end position="103"/>
    </location>
</feature>
<feature type="region of interest" description="Disordered" evidence="2">
    <location>
        <begin position="25"/>
        <end position="45"/>
    </location>
</feature>
<feature type="coiled-coil region" evidence="1">
    <location>
        <begin position="72"/>
        <end position="99"/>
    </location>
</feature>
<organismHost>
    <name type="scientific">Canis lupus familiaris</name>
    <name type="common">Dog</name>
    <name type="synonym">Canis familiaris</name>
    <dbReference type="NCBI Taxonomy" id="9615"/>
</organismHost>
<organism>
    <name type="scientific">Canine adenovirus serotype 1 (strain RI261)</name>
    <name type="common">CAdV-1</name>
    <name type="synonym">Canine adenovirus 1 (strain RI261)</name>
    <dbReference type="NCBI Taxonomy" id="69151"/>
    <lineage>
        <taxon>Viruses</taxon>
        <taxon>Varidnaviria</taxon>
        <taxon>Bamfordvirae</taxon>
        <taxon>Preplasmiviricota</taxon>
        <taxon>Tectiliviricetes</taxon>
        <taxon>Rowavirales</taxon>
        <taxon>Adenoviridae</taxon>
        <taxon>Mastadenovirus</taxon>
        <taxon>Canine mastadenovirus A</taxon>
    </lineage>
</organism>
<sequence>MDPQQKGIVNTCFLTTRIPSWAGARQNVTGSDLGGKPVPSDVLESGRPLAAPRVRTLYEEQQLNMLTVNVILDDLKTQVAAMQNSVTAIQEELKDLKQRVAAR</sequence>
<gene>
    <name evidence="1" type="primary">IX</name>
</gene>